<proteinExistence type="inferred from homology"/>
<keyword id="KW-1185">Reference proteome</keyword>
<keyword id="KW-0833">Ubl conjugation pathway</keyword>
<sequence>MVDDSTRKTLSNIPLLQIRAGPREKDVWVQRLKEEYQALIKYVENNKQSGSDWFRLESNKEGTKWFGKCWYMHNLLKYEFDVEFDIPVTYPTTAPEIALPELDGKTAKMYRGGKICLTDHFKPLWARNVPKFGIAHAMALGLAPWLAVEVPDLIEKGIITYKDNC</sequence>
<name>UFC1_DROMO</name>
<comment type="function">
    <text evidence="1">E2-like enzyme which forms an intermediate with UFM1 via a thioester linkage.</text>
</comment>
<comment type="similarity">
    <text evidence="2">Belongs to the ubiquitin-conjugating enzyme family. UFC1 subfamily.</text>
</comment>
<feature type="chain" id="PRO_0000391971" description="Ubiquitin-fold modifier-conjugating enzyme 1">
    <location>
        <begin position="1"/>
        <end position="165"/>
    </location>
</feature>
<feature type="active site" description="Glycyl thioester intermediate" evidence="1">
    <location>
        <position position="116"/>
    </location>
</feature>
<protein>
    <recommendedName>
        <fullName>Ubiquitin-fold modifier-conjugating enzyme 1</fullName>
    </recommendedName>
    <alternativeName>
        <fullName>Ufm1-conjugating enzyme 1</fullName>
    </alternativeName>
</protein>
<organism>
    <name type="scientific">Drosophila mojavensis</name>
    <name type="common">Fruit fly</name>
    <dbReference type="NCBI Taxonomy" id="7230"/>
    <lineage>
        <taxon>Eukaryota</taxon>
        <taxon>Metazoa</taxon>
        <taxon>Ecdysozoa</taxon>
        <taxon>Arthropoda</taxon>
        <taxon>Hexapoda</taxon>
        <taxon>Insecta</taxon>
        <taxon>Pterygota</taxon>
        <taxon>Neoptera</taxon>
        <taxon>Endopterygota</taxon>
        <taxon>Diptera</taxon>
        <taxon>Brachycera</taxon>
        <taxon>Muscomorpha</taxon>
        <taxon>Ephydroidea</taxon>
        <taxon>Drosophilidae</taxon>
        <taxon>Drosophila</taxon>
    </lineage>
</organism>
<accession>B4KQQ4</accession>
<gene>
    <name type="ORF">GI20416</name>
</gene>
<dbReference type="EMBL" id="CH933808">
    <property type="protein sequence ID" value="EDW09253.1"/>
    <property type="molecule type" value="Genomic_DNA"/>
</dbReference>
<dbReference type="RefSeq" id="XP_002005318.2">
    <property type="nucleotide sequence ID" value="XM_002005282.2"/>
</dbReference>
<dbReference type="SMR" id="B4KQQ4"/>
<dbReference type="FunCoup" id="B4KQQ4">
    <property type="interactions" value="1518"/>
</dbReference>
<dbReference type="EnsemblMetazoa" id="FBtr0171141">
    <property type="protein sequence ID" value="FBpp0169633"/>
    <property type="gene ID" value="FBgn0143152"/>
</dbReference>
<dbReference type="EnsemblMetazoa" id="XM_002005282.4">
    <property type="protein sequence ID" value="XP_002005318.3"/>
    <property type="gene ID" value="LOC6579422"/>
</dbReference>
<dbReference type="GeneID" id="6579422"/>
<dbReference type="KEGG" id="dmo:Dmoj_GI20416"/>
<dbReference type="CTD" id="51506"/>
<dbReference type="eggNOG" id="KOG3357">
    <property type="taxonomic scope" value="Eukaryota"/>
</dbReference>
<dbReference type="HOGENOM" id="CLU_101170_0_0_1"/>
<dbReference type="InParanoid" id="B4KQQ4"/>
<dbReference type="OMA" id="LWQKNVP"/>
<dbReference type="OrthoDB" id="10256182at2759"/>
<dbReference type="PhylomeDB" id="B4KQQ4"/>
<dbReference type="Proteomes" id="UP000009192">
    <property type="component" value="Unassembled WGS sequence"/>
</dbReference>
<dbReference type="GO" id="GO:0005737">
    <property type="term" value="C:cytoplasm"/>
    <property type="evidence" value="ECO:0007669"/>
    <property type="project" value="TreeGrafter"/>
</dbReference>
<dbReference type="GO" id="GO:0061657">
    <property type="term" value="F:UFM1 conjugating enzyme activity"/>
    <property type="evidence" value="ECO:0007669"/>
    <property type="project" value="InterPro"/>
</dbReference>
<dbReference type="GO" id="GO:1990592">
    <property type="term" value="P:protein K69-linked ufmylation"/>
    <property type="evidence" value="ECO:0007669"/>
    <property type="project" value="TreeGrafter"/>
</dbReference>
<dbReference type="CDD" id="cd11686">
    <property type="entry name" value="UBCc_UFC1"/>
    <property type="match status" value="1"/>
</dbReference>
<dbReference type="FunFam" id="3.10.110.10:FF:000042">
    <property type="entry name" value="Ubiquitin-fold modifier-conjugating enzyme 1"/>
    <property type="match status" value="1"/>
</dbReference>
<dbReference type="Gene3D" id="3.10.110.10">
    <property type="entry name" value="Ubiquitin Conjugating Enzyme"/>
    <property type="match status" value="1"/>
</dbReference>
<dbReference type="InterPro" id="IPR016135">
    <property type="entry name" value="UBQ-conjugating_enzyme/RWD"/>
</dbReference>
<dbReference type="InterPro" id="IPR014806">
    <property type="entry name" value="Ufc1"/>
</dbReference>
<dbReference type="PANTHER" id="PTHR12921">
    <property type="entry name" value="UBIQUITIN-FOLD MODIFIER-CONJUGATING ENZYME 1"/>
    <property type="match status" value="1"/>
</dbReference>
<dbReference type="PANTHER" id="PTHR12921:SF0">
    <property type="entry name" value="UBIQUITIN-FOLD MODIFIER-CONJUGATING ENZYME 1"/>
    <property type="match status" value="1"/>
</dbReference>
<dbReference type="Pfam" id="PF08694">
    <property type="entry name" value="UFC1"/>
    <property type="match status" value="1"/>
</dbReference>
<dbReference type="PIRSF" id="PIRSF008716">
    <property type="entry name" value="DUF1782"/>
    <property type="match status" value="1"/>
</dbReference>
<dbReference type="SUPFAM" id="SSF54495">
    <property type="entry name" value="UBC-like"/>
    <property type="match status" value="1"/>
</dbReference>
<evidence type="ECO:0000250" key="1"/>
<evidence type="ECO:0000305" key="2"/>
<reference key="1">
    <citation type="journal article" date="2007" name="Nature">
        <title>Evolution of genes and genomes on the Drosophila phylogeny.</title>
        <authorList>
            <consortium name="Drosophila 12 genomes consortium"/>
        </authorList>
    </citation>
    <scope>NUCLEOTIDE SEQUENCE [LARGE SCALE GENOMIC DNA]</scope>
    <source>
        <strain>Tucson 15081-1352.22</strain>
    </source>
</reference>